<sequence length="244" mass="26622">DSLSYYHSPADSFSSMGSPVNTQDFCADLSVSSANFIPTETAISTSPDLQWLVQPTLVSSVAPSQTRAPHPYGLPTQSAGAYARAGMVKTVSGGRAQSIGRRGKVEQLSPEEEVKRRIRRERNKMAAAKCRNRRRELTDTLQAETDQLEDEKSALQTEIANLLKEKEKLEFILAAHRPACKIPDDLGFPEEMSVASLDLTGGLLPLLNDPEPKPSLEPVKSSFDDFLFPASSGHSGFISMAGWQ</sequence>
<dbReference type="EMBL" id="K02712">
    <property type="protein sequence ID" value="AAA46573.1"/>
    <property type="status" value="ALT_INIT"/>
    <property type="molecule type" value="Genomic_DNA"/>
</dbReference>
<dbReference type="PIR" id="B23244">
    <property type="entry name" value="TVMVFB"/>
</dbReference>
<dbReference type="SMR" id="P29176"/>
<dbReference type="Proteomes" id="UP000237129">
    <property type="component" value="Segment"/>
</dbReference>
<dbReference type="GO" id="GO:0042025">
    <property type="term" value="C:host cell nucleus"/>
    <property type="evidence" value="ECO:0007669"/>
    <property type="project" value="UniProtKB-SubCell"/>
</dbReference>
<dbReference type="GO" id="GO:0000981">
    <property type="term" value="F:DNA-binding transcription factor activity, RNA polymerase II-specific"/>
    <property type="evidence" value="ECO:0007669"/>
    <property type="project" value="TreeGrafter"/>
</dbReference>
<dbReference type="GO" id="GO:0000978">
    <property type="term" value="F:RNA polymerase II cis-regulatory region sequence-specific DNA binding"/>
    <property type="evidence" value="ECO:0007669"/>
    <property type="project" value="TreeGrafter"/>
</dbReference>
<dbReference type="CDD" id="cd14721">
    <property type="entry name" value="bZIP_Fos"/>
    <property type="match status" value="1"/>
</dbReference>
<dbReference type="FunFam" id="1.20.5.170:FF:000006">
    <property type="entry name" value="fos-related antigen 2 isoform X1"/>
    <property type="match status" value="1"/>
</dbReference>
<dbReference type="Gene3D" id="1.20.5.170">
    <property type="match status" value="1"/>
</dbReference>
<dbReference type="InterPro" id="IPR000837">
    <property type="entry name" value="AP-1"/>
</dbReference>
<dbReference type="InterPro" id="IPR004827">
    <property type="entry name" value="bZIP"/>
</dbReference>
<dbReference type="InterPro" id="IPR046347">
    <property type="entry name" value="bZIP_sf"/>
</dbReference>
<dbReference type="PANTHER" id="PTHR23351">
    <property type="entry name" value="FOS TRANSCRIPTION FACTOR-RELATED"/>
    <property type="match status" value="1"/>
</dbReference>
<dbReference type="PANTHER" id="PTHR23351:SF4">
    <property type="entry name" value="PROTEIN C-FOS"/>
    <property type="match status" value="1"/>
</dbReference>
<dbReference type="Pfam" id="PF00170">
    <property type="entry name" value="bZIP_1"/>
    <property type="match status" value="1"/>
</dbReference>
<dbReference type="PRINTS" id="PR00042">
    <property type="entry name" value="LEUZIPPRFOS"/>
</dbReference>
<dbReference type="SMART" id="SM00338">
    <property type="entry name" value="BRLZ"/>
    <property type="match status" value="1"/>
</dbReference>
<dbReference type="SUPFAM" id="SSF57959">
    <property type="entry name" value="Leucine zipper domain"/>
    <property type="match status" value="1"/>
</dbReference>
<dbReference type="PROSITE" id="PS50217">
    <property type="entry name" value="BZIP"/>
    <property type="match status" value="1"/>
</dbReference>
<dbReference type="PROSITE" id="PS00036">
    <property type="entry name" value="BZIP_BASIC"/>
    <property type="match status" value="1"/>
</dbReference>
<name>FOSX_MSVFR</name>
<gene>
    <name type="primary">FOS-FOX</name>
</gene>
<organismHost>
    <name type="scientific">Mus musculus</name>
    <name type="common">Mouse</name>
    <dbReference type="NCBI Taxonomy" id="10090"/>
</organismHost>
<evidence type="ECO:0000255" key="1">
    <source>
        <dbReference type="PROSITE-ProRule" id="PRU00978"/>
    </source>
</evidence>
<evidence type="ECO:0000305" key="2"/>
<comment type="subcellular location">
    <subcellularLocation>
        <location evidence="2">Host nucleus</location>
    </subcellularLocation>
</comment>
<comment type="miscellaneous">
    <text>This protein is synthesized as a Gag-Fos-Fox polyprotein.</text>
</comment>
<comment type="similarity">
    <text evidence="2">Belongs to the bZIP family. Fos subfamily.</text>
</comment>
<comment type="sequence caution" evidence="2">
    <conflict type="erroneous initiation">
        <sequence resource="EMBL-CDS" id="AAA46573"/>
    </conflict>
</comment>
<organism>
    <name type="scientific">FBR murine osteosarcoma virus</name>
    <name type="common">FBR-MSV</name>
    <name type="synonym">Finkel-Biskis-Reilly murine osteosarcoma virus</name>
    <dbReference type="NCBI Taxonomy" id="353765"/>
    <lineage>
        <taxon>Viruses</taxon>
        <taxon>Riboviria</taxon>
        <taxon>Pararnavirae</taxon>
        <taxon>Artverviricota</taxon>
        <taxon>Revtraviricetes</taxon>
        <taxon>Ortervirales</taxon>
        <taxon>Retroviridae</taxon>
        <taxon>Orthoretrovirinae</taxon>
        <taxon>Gammaretrovirus</taxon>
    </lineage>
</organism>
<protein>
    <recommendedName>
        <fullName>Transforming protein v-Fos/v-Fox</fullName>
    </recommendedName>
</protein>
<accession>P29176</accession>
<proteinExistence type="inferred from homology"/>
<keyword id="KW-0238">DNA-binding</keyword>
<keyword id="KW-1048">Host nucleus</keyword>
<keyword id="KW-0553">Oncogene</keyword>
<feature type="chain" id="PRO_0000076461" description="Transforming protein v-Fos/v-Fox">
    <location>
        <begin position="1"/>
        <end position="244"/>
    </location>
</feature>
<feature type="domain" description="bZIP" evidence="1">
    <location>
        <begin position="113"/>
        <end position="176"/>
    </location>
</feature>
<feature type="region of interest" description="Transforming protein v-Fos">
    <location>
        <begin position="1"/>
        <end position="236"/>
    </location>
</feature>
<feature type="region of interest" description="Basic motif" evidence="1">
    <location>
        <begin position="115"/>
        <end position="135"/>
    </location>
</feature>
<feature type="region of interest" description="Leucine-zipper" evidence="1">
    <location>
        <begin position="141"/>
        <end position="169"/>
    </location>
</feature>
<feature type="region of interest" description="Transforming protein v-Fox">
    <location>
        <begin position="237"/>
        <end position="244"/>
    </location>
</feature>
<reference key="1">
    <citation type="journal article" date="1984" name="Virology">
        <title>FBR murine osteosarcoma virus. II. Nucleotide sequence of the provirus reveals that the genome contains sequences acquired from two cellular genes.</title>
        <authorList>
            <person name="van Beveren C."/>
            <person name="Enami S."/>
            <person name="Curran T."/>
            <person name="Verma I.M."/>
        </authorList>
    </citation>
    <scope>NUCLEOTIDE SEQUENCE [GENOMIC DNA]</scope>
</reference>